<feature type="signal peptide" evidence="1">
    <location>
        <begin position="1"/>
        <end position="18"/>
    </location>
</feature>
<feature type="chain" id="PRO_0000440461" description="Hemagglutinin" evidence="1">
    <location>
        <begin position="19"/>
        <end position="570"/>
    </location>
</feature>
<feature type="chain" id="PRO_0000038998" description="Hemagglutinin HA1 chain" evidence="1">
    <location>
        <begin position="19"/>
        <end position="348"/>
    </location>
</feature>
<feature type="chain" id="PRO_0000038999" description="Hemagglutinin HA2 chain" evidence="1">
    <location>
        <begin position="350"/>
        <end position="570"/>
    </location>
</feature>
<feature type="topological domain" description="Extracellular" evidence="1">
    <location>
        <begin position="19"/>
        <end position="533"/>
    </location>
</feature>
<feature type="transmembrane region" description="Helical" evidence="1">
    <location>
        <begin position="534"/>
        <end position="554"/>
    </location>
</feature>
<feature type="topological domain" description="Cytoplasmic" evidence="1">
    <location>
        <begin position="555"/>
        <end position="570"/>
    </location>
</feature>
<feature type="site" description="Cleavage; by host" evidence="1">
    <location>
        <begin position="349"/>
        <end position="350"/>
    </location>
</feature>
<feature type="lipid moiety-binding region" description="S-palmitoyl cysteine; by host" evidence="1">
    <location>
        <position position="566"/>
    </location>
</feature>
<feature type="lipid moiety-binding region" description="S-palmitoyl cysteine; by host" evidence="1">
    <location>
        <position position="569"/>
    </location>
</feature>
<feature type="glycosylation site" description="N-linked (GlcNAc...) asparagine; by host" evidence="1">
    <location>
        <position position="30"/>
    </location>
</feature>
<feature type="glycosylation site" description="N-linked (GlcNAc...) asparagine; by host" evidence="1">
    <location>
        <position position="46"/>
    </location>
</feature>
<feature type="glycosylation site" description="N-linked (GlcNAc...) asparagine; by host" evidence="1">
    <location>
        <position position="249"/>
    </location>
</feature>
<feature type="glycosylation site" description="N-linked (GlcNAc...) asparagine; by host" evidence="1">
    <location>
        <position position="335"/>
    </location>
</feature>
<feature type="glycosylation site" description="N-linked (GlcNAc...) asparagine; by host" evidence="1">
    <location>
        <position position="431"/>
    </location>
</feature>
<feature type="glycosylation site" description="N-linked (GlcNAc...) asparagine; by host" evidence="1">
    <location>
        <position position="503"/>
    </location>
</feature>
<feature type="disulfide bond" description="Interchain (between HA1 and HA2 chains)" evidence="1">
    <location>
        <begin position="22"/>
        <end position="486"/>
    </location>
</feature>
<feature type="disulfide bond" evidence="1">
    <location>
        <begin position="60"/>
        <end position="286"/>
    </location>
</feature>
<feature type="disulfide bond" evidence="1">
    <location>
        <begin position="72"/>
        <end position="84"/>
    </location>
</feature>
<feature type="disulfide bond" evidence="1">
    <location>
        <begin position="105"/>
        <end position="147"/>
    </location>
</feature>
<feature type="disulfide bond" evidence="1">
    <location>
        <begin position="290"/>
        <end position="314"/>
    </location>
</feature>
<feature type="disulfide bond" evidence="1">
    <location>
        <begin position="493"/>
        <end position="497"/>
    </location>
</feature>
<proteinExistence type="inferred from homology"/>
<reference key="1">
    <citation type="journal article" date="1992" name="Virus Res.">
        <title>Sequence analysis of the equine H7 influenza virus haemagglutinin gene.</title>
        <authorList>
            <person name="Gibson C.A."/>
            <person name="Daniels R.S."/>
            <person name="Oxford J.S."/>
            <person name="McCauley J.W."/>
        </authorList>
    </citation>
    <scope>NUCLEOTIDE SEQUENCE [GENOMIC RNA]</scope>
</reference>
<evidence type="ECO:0000255" key="1">
    <source>
        <dbReference type="HAMAP-Rule" id="MF_04072"/>
    </source>
</evidence>
<evidence type="ECO:0000305" key="2"/>
<organism>
    <name type="scientific">Influenza A virus (strain A/Equine/Sao Paulo/1/1976 H7N7)</name>
    <dbReference type="NCBI Taxonomy" id="217828"/>
    <lineage>
        <taxon>Viruses</taxon>
        <taxon>Riboviria</taxon>
        <taxon>Orthornavirae</taxon>
        <taxon>Negarnaviricota</taxon>
        <taxon>Polyploviricotina</taxon>
        <taxon>Insthoviricetes</taxon>
        <taxon>Articulavirales</taxon>
        <taxon>Orthomyxoviridae</taxon>
        <taxon>Alphainfluenzavirus</taxon>
        <taxon>Alphainfluenzavirus influenzae</taxon>
        <taxon>Influenza A virus</taxon>
    </lineage>
</organism>
<dbReference type="EMBL" id="X62559">
    <property type="protein sequence ID" value="CAA44436.1"/>
    <property type="molecule type" value="Genomic_RNA"/>
</dbReference>
<dbReference type="PIR" id="S22021">
    <property type="entry name" value="S22021"/>
</dbReference>
<dbReference type="SMR" id="P26102"/>
<dbReference type="GlyCosmos" id="P26102">
    <property type="glycosylation" value="6 sites, No reported glycans"/>
</dbReference>
<dbReference type="GO" id="GO:0020002">
    <property type="term" value="C:host cell plasma membrane"/>
    <property type="evidence" value="ECO:0007669"/>
    <property type="project" value="UniProtKB-SubCell"/>
</dbReference>
<dbReference type="GO" id="GO:0016020">
    <property type="term" value="C:membrane"/>
    <property type="evidence" value="ECO:0007669"/>
    <property type="project" value="UniProtKB-UniRule"/>
</dbReference>
<dbReference type="GO" id="GO:0019031">
    <property type="term" value="C:viral envelope"/>
    <property type="evidence" value="ECO:0007669"/>
    <property type="project" value="UniProtKB-UniRule"/>
</dbReference>
<dbReference type="GO" id="GO:0055036">
    <property type="term" value="C:virion membrane"/>
    <property type="evidence" value="ECO:0007669"/>
    <property type="project" value="UniProtKB-SubCell"/>
</dbReference>
<dbReference type="GO" id="GO:0046789">
    <property type="term" value="F:host cell surface receptor binding"/>
    <property type="evidence" value="ECO:0007669"/>
    <property type="project" value="UniProtKB-UniRule"/>
</dbReference>
<dbReference type="GO" id="GO:0075512">
    <property type="term" value="P:clathrin-dependent endocytosis of virus by host cell"/>
    <property type="evidence" value="ECO:0007669"/>
    <property type="project" value="UniProtKB-UniRule"/>
</dbReference>
<dbReference type="GO" id="GO:0039654">
    <property type="term" value="P:fusion of virus membrane with host endosome membrane"/>
    <property type="evidence" value="ECO:0007669"/>
    <property type="project" value="UniProtKB-UniRule"/>
</dbReference>
<dbReference type="GO" id="GO:0019064">
    <property type="term" value="P:fusion of virus membrane with host plasma membrane"/>
    <property type="evidence" value="ECO:0007669"/>
    <property type="project" value="InterPro"/>
</dbReference>
<dbReference type="GO" id="GO:0046761">
    <property type="term" value="P:viral budding from plasma membrane"/>
    <property type="evidence" value="ECO:0007669"/>
    <property type="project" value="UniProtKB-UniRule"/>
</dbReference>
<dbReference type="GO" id="GO:0019062">
    <property type="term" value="P:virion attachment to host cell"/>
    <property type="evidence" value="ECO:0007669"/>
    <property type="project" value="UniProtKB-KW"/>
</dbReference>
<dbReference type="Gene3D" id="3.90.20.10">
    <property type="match status" value="1"/>
</dbReference>
<dbReference type="Gene3D" id="3.90.209.20">
    <property type="match status" value="1"/>
</dbReference>
<dbReference type="HAMAP" id="MF_04072">
    <property type="entry name" value="INFV_HEMA"/>
    <property type="match status" value="1"/>
</dbReference>
<dbReference type="InterPro" id="IPR008980">
    <property type="entry name" value="Capsid_hemagglutn"/>
</dbReference>
<dbReference type="InterPro" id="IPR013828">
    <property type="entry name" value="Hemagglutn_HA1_a/b_dom_sf"/>
</dbReference>
<dbReference type="InterPro" id="IPR000149">
    <property type="entry name" value="Hemagglutn_influenz_A"/>
</dbReference>
<dbReference type="InterPro" id="IPR001364">
    <property type="entry name" value="Hemagglutn_influenz_A/B"/>
</dbReference>
<dbReference type="Pfam" id="PF00509">
    <property type="entry name" value="Hemagglutinin"/>
    <property type="match status" value="1"/>
</dbReference>
<dbReference type="PRINTS" id="PR00330">
    <property type="entry name" value="HEMAGGLUTN1"/>
</dbReference>
<dbReference type="PRINTS" id="PR00329">
    <property type="entry name" value="HEMAGGLUTN12"/>
</dbReference>
<dbReference type="SUPFAM" id="SSF58064">
    <property type="entry name" value="Influenza hemagglutinin (stalk)"/>
    <property type="match status" value="1"/>
</dbReference>
<dbReference type="SUPFAM" id="SSF49818">
    <property type="entry name" value="Viral protein domain"/>
    <property type="match status" value="1"/>
</dbReference>
<gene>
    <name evidence="1" type="primary">HA</name>
</gene>
<name>HEMA_I76AL</name>
<sequence>MNTQILILAISAFLCVRADKICLGHHAVSNGTKVDTLTEKGIEVVNATETVEQKNIPKICSKGKQTIDLGQCGLLGTTIGPPQCDQFLEFSANLIIERREGDDICYPGKFDNEETLRQILRKSGGIKKENMGFTYTGVRTNGETSACRRSRSSFYAEMKWLLSNTDNGVFPQMTKSYKNTKREPALIIWGIHHSGSTAEQTRLYGSGNKLVTVWSSKYQRSFAPNPGPRPQINGQSGRIDFYWLMLDPNDTVTFSFNGAFIAPDRASFLRGKSLGIQSDAQLDNNCEGECYHIGGTIISNLPFQNINSRAIGKCPRYVKQKSLMLATGMKNVPENSTHKQLTHHMRKKRGLFGAIAGFIENGWEGLIDGWYGYRHQNAQGEGTAADYKSTQSAINQITGKLNRLIEKTNQQFELIDNEFNEIEKQIGNVINWTRDSIIEVWSYNAEFLVAVENQHTIDLTDSEMNKLYEKVRRQLRENAEEDGNGCFEIFHQCDNDCMASIRNNTYDHKKYRKEAIQNRIQIDAVKLSSGYKDIILWFSFGASCFLFLAIAMVLAFICIKNGNMRCTICI</sequence>
<accession>P26102</accession>
<keyword id="KW-1167">Clathrin- and caveolin-independent endocytosis of virus by host</keyword>
<keyword id="KW-1165">Clathrin-mediated endocytosis of virus by host</keyword>
<keyword id="KW-1015">Disulfide bond</keyword>
<keyword id="KW-1170">Fusion of virus membrane with host endosomal membrane</keyword>
<keyword id="KW-1168">Fusion of virus membrane with host membrane</keyword>
<keyword id="KW-0325">Glycoprotein</keyword>
<keyword id="KW-0348">Hemagglutinin</keyword>
<keyword id="KW-1032">Host cell membrane</keyword>
<keyword id="KW-1043">Host membrane</keyword>
<keyword id="KW-0945">Host-virus interaction</keyword>
<keyword id="KW-0449">Lipoprotein</keyword>
<keyword id="KW-0472">Membrane</keyword>
<keyword id="KW-0564">Palmitate</keyword>
<keyword id="KW-0732">Signal</keyword>
<keyword id="KW-0812">Transmembrane</keyword>
<keyword id="KW-1133">Transmembrane helix</keyword>
<keyword id="KW-1161">Viral attachment to host cell</keyword>
<keyword id="KW-0261">Viral envelope protein</keyword>
<keyword id="KW-1162">Viral penetration into host cytoplasm</keyword>
<keyword id="KW-0946">Virion</keyword>
<keyword id="KW-1164">Virus endocytosis by host</keyword>
<keyword id="KW-1160">Virus entry into host cell</keyword>
<protein>
    <recommendedName>
        <fullName evidence="1">Hemagglutinin</fullName>
    </recommendedName>
    <component>
        <recommendedName>
            <fullName evidence="1">Hemagglutinin HA1 chain</fullName>
        </recommendedName>
    </component>
    <component>
        <recommendedName>
            <fullName evidence="1">Hemagglutinin HA2 chain</fullName>
        </recommendedName>
    </component>
</protein>
<comment type="function">
    <text>Binds to sialic acid-containing receptors on the cell surface, bringing about the attachment of the virus particle to the cell. This attachment induces virion internalization of about two third of the virus particles through clathrin-dependent endocytosis and about one third through a clathrin- and caveolin-independent pathway. Plays a major role in the determination of host range restriction and virulence. Class I viral fusion protein. Responsible for penetration of the virus into the cell cytoplasm by mediating the fusion of the membrane of the endocytosed virus particle with the endosomal membrane. Low pH in endosomes induces an irreversible conformational change in HA2, releasing the fusion hydrophobic peptide. Several trimers are required to form a competent fusion pore.</text>
</comment>
<comment type="function">
    <text evidence="1">Binds to sialic acid-containing receptors on the cell surface, bringing about the attachment of the virus particle to the cell. This attachment induces virion internalization either through clathrin-dependent endocytosis or through clathrin- and caveolin-independent pathway. Plays a major role in the determination of host range restriction and virulence. Class I viral fusion protein. Responsible for penetration of the virus into the cell cytoplasm by mediating the fusion of the membrane of the endocytosed virus particle with the endosomal membrane. Low pH in endosomes induces an irreversible conformational change in HA2, releasing the fusion hydrophobic peptide. Several trimers are required to form a competent fusion pore.</text>
</comment>
<comment type="subunit">
    <text evidence="1">Homotrimer of disulfide-linked HA1-HA2.</text>
</comment>
<comment type="subcellular location">
    <subcellularLocation>
        <location evidence="1">Virion membrane</location>
        <topology evidence="1">Single-pass type I membrane protein</topology>
    </subcellularLocation>
    <subcellularLocation>
        <location evidence="1">Host apical cell membrane</location>
        <topology evidence="1">Single-pass type I membrane protein</topology>
    </subcellularLocation>
    <text evidence="1">Targeted to the apical plasma membrane in epithelial polarized cells through a signal present in the transmembrane domain. Associated with glycosphingolipid- and cholesterol-enriched detergent-resistant lipid rafts.</text>
</comment>
<comment type="PTM">
    <text evidence="1">Palmitoylated.</text>
</comment>
<comment type="PTM">
    <text evidence="1">In natural infection, inactive HA is matured into HA1 and HA2 outside the cell by one or more trypsin-like, arginine-specific endoprotease secreted by the bronchial epithelial cells. One identified protease that may be involved in this process is secreted in lungs by club cells.</text>
</comment>
<comment type="miscellaneous">
    <text>Major glycoprotein, comprises over 80% of the envelope proteins present in virus particle.</text>
</comment>
<comment type="miscellaneous">
    <text>The extent of infection into host organism is determined by HA. Influenza viruses bud from the apical surface of polarized epithelial cells (e.g. bronchial epithelial cells) into lumen of lungs and are therefore usually pneumotropic. The reason is that HA is cleaved by tryptase clara which is restricted to lungs. However, HAs of H5 and H7 pantropic avian viruses subtypes can be cleaved by furin and subtilisin-type enzymes, allowing the virus to grow in other organs than lungs.</text>
</comment>
<comment type="miscellaneous">
    <text evidence="2">The influenza A genome consist of 8 RNA segments. Genetic variation of hemagglutinin and/or neuraminidase genes results in the emergence of new influenza strains. The mechanism of variation can be the result of point mutations or the result of genetic reassortment between segments of two different strains.</text>
</comment>
<comment type="similarity">
    <text evidence="1">Belongs to the influenza viruses hemagglutinin family.</text>
</comment>
<organismHost>
    <name type="scientific">Aves</name>
    <dbReference type="NCBI Taxonomy" id="8782"/>
</organismHost>
<organismHost>
    <name type="scientific">Equus caballus</name>
    <name type="common">Horse</name>
    <dbReference type="NCBI Taxonomy" id="9796"/>
</organismHost>
<organismHost>
    <name type="scientific">Homo sapiens</name>
    <name type="common">Human</name>
    <dbReference type="NCBI Taxonomy" id="9606"/>
</organismHost>
<organismHost>
    <name type="scientific">Phocidae</name>
    <name type="common">true seals</name>
    <dbReference type="NCBI Taxonomy" id="9709"/>
</organismHost>